<evidence type="ECO:0000255" key="1">
    <source>
        <dbReference type="HAMAP-Rule" id="MF_03143"/>
    </source>
</evidence>
<sequence length="1573" mass="170777">MAEPTKISILGRESIVADCGIWGTYIVQDLLTNLPSTTYVLVTDTNLGSIYREKFAKIFNEAAAALSPAPRLLTKEIPPGENSKSRQGKADIEDWMLQQTCGRDTVIIALGGGVIGDLLGFVAATYMRGIRFVQVPTTLLAMVDSSIGGKTAIDTPLGKNLIGAIWQPHRIYIDIDFIDTLPEREFINGMAEVIKTAAISDEKEFAALEQHADAILKAARSKPGKGRFDLVRQVVKDRIVASARHKAFVVTADEREGGLRNLLNLGHSIGHAIEAILSPQVLHGECVAIGMVKELDLARYLGILKPVAVSRMVKCLSKYGLPTSLKDSRVRKHTAGKHCSLEQMMANMALDKKNDGPRKKVVLLSAIGQTYEPKASVVSNEDIRAVLAPSIEVIPGVPKDLNVVCAPPGSKSISNRALVLAALGSGTVRVKNLLHSDDTEVMLNALERLGAATFAWEDEGEVLVVNGNGGKMQASPTELYLGNAGTASRFLTSVATLSGKGSVDYNILTGNNRMKQRPIGDLVDALTINGAQVEYLEKAGSLPLKIAASGGFKGGRINLAAKVSSQYVSSLLMCAPYAKEPVTLKLVGGRPISLSYIEMTTAMMRSFGIDVQKSTTEEWTYHIPQGSYNNPPEYVIESDASSATYPLAIAAVTGTTCTVPNIGSASLQGDARFAVEVLRPMGCKVEQTATSTTVTGPADGVLRPLPNVDMEPMTDAFLGASVLAAIAQGEGGNHATRIYGIANQRVKECNRIEAMRVELAKFGVVCREHPDGLEIDGIDRSTLRHPAGGVFCYDDHRVAFSFSILSLVAPTPTLILEKECVGKTWPTYWDALKQKFGVSLKGKELAESEITHGPADRSDASIVIIGMRGAGKTTTGRWAAKALNRKFIDLDVELEQTEGKTIPDLIKERGWKGFRDAELSLFKRALTERPTGHVFACGGGIVEIAEARNILIDYHKNKGNVLLVMRDIKKVMEFLNIDKTRPAYIEDMMSVWLRRKPWYQECSNVQYYSRHSSSPELALAMDDFDRFIQFVSGKTDYLAAIRRKRLSFFMSLTLTDLRDSGDLLRTVASGSDAVELRVDLLKDPSSGNGIPSAEYVAEQISFYRSRVSLPIVFTIRTVSQGGKFPNDAHDAALELIMLAIRSGCEFIDLEITFPEDLLRKVAESKAHAKIIASHHDPQGKLNWANGSWIQYYNKALQYGDIIKLVGVAETLKDNTALREFKDWAEQAHPDVPVIAINMGDKGQLSRMLNGFLTPVSHPALPFKAAPGQLSAAEIRKGLSIMGEIPAKKFAIFGKPVSVSRSPAMHNTLFEQNGLPYVYTRLETDQAQDVKEFIRSPDFGGASATIPLKLDIIPLIDEVLNEAEIIGAVNTIIPVEGKDGSTRLIGRNTDWSGIVRCLREAGAHSNEGESSALVIGGGGTARAAIYALHNMGFSTVYVLGRSPEKIQNMASTFPTGFDIRVLENASDIENIPRVAVGTIPGDRPIEANMREILCTIFERSGRAADGKSAAVLLEMAYKPSVTPLMQLASDSGWTTIPGLEALVGQGVYQFEYWTGITPVYEVARNAVLGTDETK</sequence>
<dbReference type="EC" id="4.2.3.4" evidence="1"/>
<dbReference type="EC" id="2.5.1.19" evidence="1"/>
<dbReference type="EC" id="2.7.1.71" evidence="1"/>
<dbReference type="EC" id="4.2.1.10" evidence="1"/>
<dbReference type="EC" id="1.1.1.25" evidence="1"/>
<dbReference type="EMBL" id="DS995907">
    <property type="protein sequence ID" value="EEA18560.1"/>
    <property type="molecule type" value="Genomic_DNA"/>
</dbReference>
<dbReference type="RefSeq" id="XP_002153704.1">
    <property type="nucleotide sequence ID" value="XM_002153668.1"/>
</dbReference>
<dbReference type="SMR" id="B6QWH9"/>
<dbReference type="STRING" id="441960.B6QWH9"/>
<dbReference type="VEuPathDB" id="FungiDB:PMAA_008390"/>
<dbReference type="HOGENOM" id="CLU_001201_1_2_1"/>
<dbReference type="OrthoDB" id="3114at28568"/>
<dbReference type="PhylomeDB" id="B6QWH9"/>
<dbReference type="UniPathway" id="UPA00053">
    <property type="reaction ID" value="UER00085"/>
</dbReference>
<dbReference type="UniPathway" id="UPA00053">
    <property type="reaction ID" value="UER00086"/>
</dbReference>
<dbReference type="UniPathway" id="UPA00053">
    <property type="reaction ID" value="UER00087"/>
</dbReference>
<dbReference type="UniPathway" id="UPA00053">
    <property type="reaction ID" value="UER00088"/>
</dbReference>
<dbReference type="UniPathway" id="UPA00053">
    <property type="reaction ID" value="UER00089"/>
</dbReference>
<dbReference type="Proteomes" id="UP000001294">
    <property type="component" value="Unassembled WGS sequence"/>
</dbReference>
<dbReference type="GO" id="GO:0005737">
    <property type="term" value="C:cytoplasm"/>
    <property type="evidence" value="ECO:0007669"/>
    <property type="project" value="UniProtKB-SubCell"/>
</dbReference>
<dbReference type="GO" id="GO:0003855">
    <property type="term" value="F:3-dehydroquinate dehydratase activity"/>
    <property type="evidence" value="ECO:0007669"/>
    <property type="project" value="UniProtKB-UniRule"/>
</dbReference>
<dbReference type="GO" id="GO:0003856">
    <property type="term" value="F:3-dehydroquinate synthase activity"/>
    <property type="evidence" value="ECO:0007669"/>
    <property type="project" value="UniProtKB-UniRule"/>
</dbReference>
<dbReference type="GO" id="GO:0003866">
    <property type="term" value="F:3-phosphoshikimate 1-carboxyvinyltransferase activity"/>
    <property type="evidence" value="ECO:0007669"/>
    <property type="project" value="UniProtKB-UniRule"/>
</dbReference>
<dbReference type="GO" id="GO:0005524">
    <property type="term" value="F:ATP binding"/>
    <property type="evidence" value="ECO:0007669"/>
    <property type="project" value="UniProtKB-UniRule"/>
</dbReference>
<dbReference type="GO" id="GO:0046872">
    <property type="term" value="F:metal ion binding"/>
    <property type="evidence" value="ECO:0007669"/>
    <property type="project" value="UniProtKB-UniRule"/>
</dbReference>
<dbReference type="GO" id="GO:0004764">
    <property type="term" value="F:shikimate 3-dehydrogenase (NADP+) activity"/>
    <property type="evidence" value="ECO:0007669"/>
    <property type="project" value="UniProtKB-UniRule"/>
</dbReference>
<dbReference type="GO" id="GO:0004765">
    <property type="term" value="F:shikimate kinase activity"/>
    <property type="evidence" value="ECO:0007669"/>
    <property type="project" value="UniProtKB-UniRule"/>
</dbReference>
<dbReference type="GO" id="GO:0008652">
    <property type="term" value="P:amino acid biosynthetic process"/>
    <property type="evidence" value="ECO:0007669"/>
    <property type="project" value="UniProtKB-KW"/>
</dbReference>
<dbReference type="GO" id="GO:0009073">
    <property type="term" value="P:aromatic amino acid family biosynthetic process"/>
    <property type="evidence" value="ECO:0007669"/>
    <property type="project" value="UniProtKB-UniRule"/>
</dbReference>
<dbReference type="GO" id="GO:0009423">
    <property type="term" value="P:chorismate biosynthetic process"/>
    <property type="evidence" value="ECO:0007669"/>
    <property type="project" value="UniProtKB-UniRule"/>
</dbReference>
<dbReference type="CDD" id="cd00502">
    <property type="entry name" value="DHQase_I"/>
    <property type="match status" value="1"/>
</dbReference>
<dbReference type="CDD" id="cd08195">
    <property type="entry name" value="DHQS"/>
    <property type="match status" value="1"/>
</dbReference>
<dbReference type="CDD" id="cd01556">
    <property type="entry name" value="EPSP_synthase"/>
    <property type="match status" value="1"/>
</dbReference>
<dbReference type="CDD" id="cd01065">
    <property type="entry name" value="NAD_bind_Shikimate_DH"/>
    <property type="match status" value="1"/>
</dbReference>
<dbReference type="CDD" id="cd00464">
    <property type="entry name" value="SK"/>
    <property type="match status" value="1"/>
</dbReference>
<dbReference type="FunFam" id="1.20.1090.10:FF:000007">
    <property type="entry name" value="Pentafunctional AROM polypeptide"/>
    <property type="match status" value="1"/>
</dbReference>
<dbReference type="FunFam" id="3.20.20.70:FF:000135">
    <property type="entry name" value="Pentafunctional AROM polypeptide"/>
    <property type="match status" value="1"/>
</dbReference>
<dbReference type="FunFam" id="3.40.50.1970:FF:000007">
    <property type="entry name" value="Pentafunctional AROM polypeptide"/>
    <property type="match status" value="1"/>
</dbReference>
<dbReference type="FunFam" id="3.40.50.300:FF:001256">
    <property type="entry name" value="Pentafunctional AROM polypeptide"/>
    <property type="match status" value="1"/>
</dbReference>
<dbReference type="FunFam" id="3.65.10.10:FF:000007">
    <property type="entry name" value="Pentafunctional AROM polypeptide"/>
    <property type="match status" value="1"/>
</dbReference>
<dbReference type="FunFam" id="3.65.10.10:FF:000008">
    <property type="entry name" value="Pentafunctional AROM polypeptide"/>
    <property type="match status" value="1"/>
</dbReference>
<dbReference type="Gene3D" id="3.40.50.1970">
    <property type="match status" value="1"/>
</dbReference>
<dbReference type="Gene3D" id="3.20.20.70">
    <property type="entry name" value="Aldolase class I"/>
    <property type="match status" value="1"/>
</dbReference>
<dbReference type="Gene3D" id="1.20.1090.10">
    <property type="entry name" value="Dehydroquinate synthase-like - alpha domain"/>
    <property type="match status" value="1"/>
</dbReference>
<dbReference type="Gene3D" id="3.65.10.10">
    <property type="entry name" value="Enolpyruvate transferase domain"/>
    <property type="match status" value="2"/>
</dbReference>
<dbReference type="Gene3D" id="3.40.50.10860">
    <property type="entry name" value="Leucine Dehydrogenase, chain A, domain 1"/>
    <property type="match status" value="1"/>
</dbReference>
<dbReference type="Gene3D" id="3.40.50.720">
    <property type="entry name" value="NAD(P)-binding Rossmann-like Domain"/>
    <property type="match status" value="1"/>
</dbReference>
<dbReference type="Gene3D" id="3.40.50.300">
    <property type="entry name" value="P-loop containing nucleotide triphosphate hydrolases"/>
    <property type="match status" value="1"/>
</dbReference>
<dbReference type="HAMAP" id="MF_00210">
    <property type="entry name" value="EPSP_synth"/>
    <property type="match status" value="1"/>
</dbReference>
<dbReference type="HAMAP" id="MF_03143">
    <property type="entry name" value="Pentafunct_AroM"/>
    <property type="match status" value="1"/>
</dbReference>
<dbReference type="HAMAP" id="MF_00109">
    <property type="entry name" value="Shikimate_kinase"/>
    <property type="match status" value="1"/>
</dbReference>
<dbReference type="InterPro" id="IPR018508">
    <property type="entry name" value="3-dehydroquinate_DH_AS"/>
</dbReference>
<dbReference type="InterPro" id="IPR013785">
    <property type="entry name" value="Aldolase_TIM"/>
</dbReference>
<dbReference type="InterPro" id="IPR046346">
    <property type="entry name" value="Aminoacid_DH-like_N_sf"/>
</dbReference>
<dbReference type="InterPro" id="IPR016037">
    <property type="entry name" value="DHQ_synth_AroB"/>
</dbReference>
<dbReference type="InterPro" id="IPR030960">
    <property type="entry name" value="DHQS/DOIS_N"/>
</dbReference>
<dbReference type="InterPro" id="IPR056179">
    <property type="entry name" value="DHQS_C"/>
</dbReference>
<dbReference type="InterPro" id="IPR001381">
    <property type="entry name" value="DHquinase_I"/>
</dbReference>
<dbReference type="InterPro" id="IPR001986">
    <property type="entry name" value="Enolpyruvate_Tfrase_dom"/>
</dbReference>
<dbReference type="InterPro" id="IPR036968">
    <property type="entry name" value="Enolpyruvate_Tfrase_sf"/>
</dbReference>
<dbReference type="InterPro" id="IPR006264">
    <property type="entry name" value="EPSP_synthase"/>
</dbReference>
<dbReference type="InterPro" id="IPR023193">
    <property type="entry name" value="EPSP_synthase_CS"/>
</dbReference>
<dbReference type="InterPro" id="IPR036291">
    <property type="entry name" value="NAD(P)-bd_dom_sf"/>
</dbReference>
<dbReference type="InterPro" id="IPR027417">
    <property type="entry name" value="P-loop_NTPase"/>
</dbReference>
<dbReference type="InterPro" id="IPR008289">
    <property type="entry name" value="Pentafunct_AroM"/>
</dbReference>
<dbReference type="InterPro" id="IPR013792">
    <property type="entry name" value="RNA3'P_cycl/enolpyr_Trfase_a/b"/>
</dbReference>
<dbReference type="InterPro" id="IPR041121">
    <property type="entry name" value="SDH_C"/>
</dbReference>
<dbReference type="InterPro" id="IPR031322">
    <property type="entry name" value="Shikimate/glucono_kinase"/>
</dbReference>
<dbReference type="InterPro" id="IPR013708">
    <property type="entry name" value="Shikimate_DH-bd_N"/>
</dbReference>
<dbReference type="InterPro" id="IPR010110">
    <property type="entry name" value="Shikimate_DH_AroM-type"/>
</dbReference>
<dbReference type="InterPro" id="IPR000623">
    <property type="entry name" value="Shikimate_kinase/TSH1"/>
</dbReference>
<dbReference type="InterPro" id="IPR023000">
    <property type="entry name" value="Shikimate_kinase_CS"/>
</dbReference>
<dbReference type="NCBIfam" id="TIGR01356">
    <property type="entry name" value="aroA"/>
    <property type="match status" value="1"/>
</dbReference>
<dbReference type="NCBIfam" id="TIGR01357">
    <property type="entry name" value="aroB"/>
    <property type="match status" value="1"/>
</dbReference>
<dbReference type="NCBIfam" id="TIGR01093">
    <property type="entry name" value="aroD"/>
    <property type="match status" value="1"/>
</dbReference>
<dbReference type="NCBIfam" id="TIGR01809">
    <property type="entry name" value="Shik-DH-AROM"/>
    <property type="match status" value="1"/>
</dbReference>
<dbReference type="PANTHER" id="PTHR21090">
    <property type="entry name" value="AROM/DEHYDROQUINATE SYNTHASE"/>
    <property type="match status" value="1"/>
</dbReference>
<dbReference type="PANTHER" id="PTHR21090:SF5">
    <property type="entry name" value="PENTAFUNCTIONAL AROM POLYPEPTIDE"/>
    <property type="match status" value="1"/>
</dbReference>
<dbReference type="Pfam" id="PF01761">
    <property type="entry name" value="DHQ_synthase"/>
    <property type="match status" value="1"/>
</dbReference>
<dbReference type="Pfam" id="PF24621">
    <property type="entry name" value="DHQS_C"/>
    <property type="match status" value="1"/>
</dbReference>
<dbReference type="Pfam" id="PF01487">
    <property type="entry name" value="DHquinase_I"/>
    <property type="match status" value="1"/>
</dbReference>
<dbReference type="Pfam" id="PF00275">
    <property type="entry name" value="EPSP_synthase"/>
    <property type="match status" value="1"/>
</dbReference>
<dbReference type="Pfam" id="PF18317">
    <property type="entry name" value="SDH_C"/>
    <property type="match status" value="1"/>
</dbReference>
<dbReference type="Pfam" id="PF08501">
    <property type="entry name" value="Shikimate_dh_N"/>
    <property type="match status" value="1"/>
</dbReference>
<dbReference type="Pfam" id="PF01202">
    <property type="entry name" value="SKI"/>
    <property type="match status" value="1"/>
</dbReference>
<dbReference type="PIRSF" id="PIRSF000514">
    <property type="entry name" value="Pentafunct_AroM"/>
    <property type="match status" value="1"/>
</dbReference>
<dbReference type="PRINTS" id="PR01100">
    <property type="entry name" value="SHIKIMTKNASE"/>
</dbReference>
<dbReference type="SUPFAM" id="SSF51569">
    <property type="entry name" value="Aldolase"/>
    <property type="match status" value="1"/>
</dbReference>
<dbReference type="SUPFAM" id="SSF53223">
    <property type="entry name" value="Aminoacid dehydrogenase-like, N-terminal domain"/>
    <property type="match status" value="1"/>
</dbReference>
<dbReference type="SUPFAM" id="SSF56796">
    <property type="entry name" value="Dehydroquinate synthase-like"/>
    <property type="match status" value="1"/>
</dbReference>
<dbReference type="SUPFAM" id="SSF55205">
    <property type="entry name" value="EPT/RTPC-like"/>
    <property type="match status" value="1"/>
</dbReference>
<dbReference type="SUPFAM" id="SSF51735">
    <property type="entry name" value="NAD(P)-binding Rossmann-fold domains"/>
    <property type="match status" value="1"/>
</dbReference>
<dbReference type="SUPFAM" id="SSF52540">
    <property type="entry name" value="P-loop containing nucleoside triphosphate hydrolases"/>
    <property type="match status" value="1"/>
</dbReference>
<dbReference type="PROSITE" id="PS01028">
    <property type="entry name" value="DEHYDROQUINASE_I"/>
    <property type="match status" value="1"/>
</dbReference>
<dbReference type="PROSITE" id="PS00104">
    <property type="entry name" value="EPSP_SYNTHASE_1"/>
    <property type="match status" value="1"/>
</dbReference>
<dbReference type="PROSITE" id="PS00885">
    <property type="entry name" value="EPSP_SYNTHASE_2"/>
    <property type="match status" value="1"/>
</dbReference>
<dbReference type="PROSITE" id="PS01128">
    <property type="entry name" value="SHIKIMATE_KINASE"/>
    <property type="match status" value="1"/>
</dbReference>
<protein>
    <recommendedName>
        <fullName evidence="1">Pentafunctional AROM polypeptide 1</fullName>
    </recommendedName>
    <domain>
        <recommendedName>
            <fullName evidence="1">3-dehydroquinate synthase</fullName>
            <shortName evidence="1">DHQS</shortName>
            <ecNumber evidence="1">4.2.3.4</ecNumber>
        </recommendedName>
    </domain>
    <domain>
        <recommendedName>
            <fullName evidence="1">3-phosphoshikimate 1-carboxyvinyltransferase</fullName>
            <ecNumber evidence="1">2.5.1.19</ecNumber>
        </recommendedName>
        <alternativeName>
            <fullName evidence="1">5-enolpyruvylshikimate-3-phosphate synthase</fullName>
            <shortName evidence="1">EPSP synthase</shortName>
            <shortName evidence="1">EPSPS</shortName>
        </alternativeName>
    </domain>
    <domain>
        <recommendedName>
            <fullName evidence="1">Shikimate kinase</fullName>
            <shortName evidence="1">SK</shortName>
            <ecNumber evidence="1">2.7.1.71</ecNumber>
        </recommendedName>
    </domain>
    <domain>
        <recommendedName>
            <fullName evidence="1">3-dehydroquinate dehydratase</fullName>
            <shortName evidence="1">3-dehydroquinase</shortName>
            <ecNumber evidence="1">4.2.1.10</ecNumber>
        </recommendedName>
    </domain>
    <domain>
        <recommendedName>
            <fullName evidence="1">Shikimate dehydrogenase</fullName>
            <ecNumber evidence="1">1.1.1.25</ecNumber>
        </recommendedName>
    </domain>
</protein>
<reference key="1">
    <citation type="journal article" date="2015" name="Genome Announc.">
        <title>Genome sequence of the AIDS-associated pathogen Penicillium marneffei (ATCC18224) and its near taxonomic relative Talaromyces stipitatus (ATCC10500).</title>
        <authorList>
            <person name="Nierman W.C."/>
            <person name="Fedorova-Abrams N.D."/>
            <person name="Andrianopoulos A."/>
        </authorList>
    </citation>
    <scope>NUCLEOTIDE SEQUENCE [LARGE SCALE GENOMIC DNA]</scope>
    <source>
        <strain>ATCC 18224 / CBS 334.59 / QM 7333</strain>
    </source>
</reference>
<keyword id="KW-0028">Amino-acid biosynthesis</keyword>
<keyword id="KW-0057">Aromatic amino acid biosynthesis</keyword>
<keyword id="KW-0067">ATP-binding</keyword>
<keyword id="KW-0963">Cytoplasm</keyword>
<keyword id="KW-0418">Kinase</keyword>
<keyword id="KW-0456">Lyase</keyword>
<keyword id="KW-0479">Metal-binding</keyword>
<keyword id="KW-0511">Multifunctional enzyme</keyword>
<keyword id="KW-0521">NADP</keyword>
<keyword id="KW-0547">Nucleotide-binding</keyword>
<keyword id="KW-0560">Oxidoreductase</keyword>
<keyword id="KW-1185">Reference proteome</keyword>
<keyword id="KW-0808">Transferase</keyword>
<keyword id="KW-0862">Zinc</keyword>
<name>ARO11_TALMQ</name>
<comment type="function">
    <text evidence="1">The AROM polypeptide catalyzes 5 consecutive enzymatic reactions in prechorismate polyaromatic amino acid biosynthesis.</text>
</comment>
<comment type="catalytic activity">
    <reaction evidence="1">
        <text>7-phospho-2-dehydro-3-deoxy-D-arabino-heptonate = 3-dehydroquinate + phosphate</text>
        <dbReference type="Rhea" id="RHEA:21968"/>
        <dbReference type="ChEBI" id="CHEBI:32364"/>
        <dbReference type="ChEBI" id="CHEBI:43474"/>
        <dbReference type="ChEBI" id="CHEBI:58394"/>
        <dbReference type="EC" id="4.2.3.4"/>
    </reaction>
</comment>
<comment type="catalytic activity">
    <reaction evidence="1">
        <text>3-dehydroquinate = 3-dehydroshikimate + H2O</text>
        <dbReference type="Rhea" id="RHEA:21096"/>
        <dbReference type="ChEBI" id="CHEBI:15377"/>
        <dbReference type="ChEBI" id="CHEBI:16630"/>
        <dbReference type="ChEBI" id="CHEBI:32364"/>
        <dbReference type="EC" id="4.2.1.10"/>
    </reaction>
</comment>
<comment type="catalytic activity">
    <reaction evidence="1">
        <text>shikimate + NADP(+) = 3-dehydroshikimate + NADPH + H(+)</text>
        <dbReference type="Rhea" id="RHEA:17737"/>
        <dbReference type="ChEBI" id="CHEBI:15378"/>
        <dbReference type="ChEBI" id="CHEBI:16630"/>
        <dbReference type="ChEBI" id="CHEBI:36208"/>
        <dbReference type="ChEBI" id="CHEBI:57783"/>
        <dbReference type="ChEBI" id="CHEBI:58349"/>
        <dbReference type="EC" id="1.1.1.25"/>
    </reaction>
</comment>
<comment type="catalytic activity">
    <reaction evidence="1">
        <text>shikimate + ATP = 3-phosphoshikimate + ADP + H(+)</text>
        <dbReference type="Rhea" id="RHEA:13121"/>
        <dbReference type="ChEBI" id="CHEBI:15378"/>
        <dbReference type="ChEBI" id="CHEBI:30616"/>
        <dbReference type="ChEBI" id="CHEBI:36208"/>
        <dbReference type="ChEBI" id="CHEBI:145989"/>
        <dbReference type="ChEBI" id="CHEBI:456216"/>
        <dbReference type="EC" id="2.7.1.71"/>
    </reaction>
</comment>
<comment type="catalytic activity">
    <reaction evidence="1">
        <text>3-phosphoshikimate + phosphoenolpyruvate = 5-O-(1-carboxyvinyl)-3-phosphoshikimate + phosphate</text>
        <dbReference type="Rhea" id="RHEA:21256"/>
        <dbReference type="ChEBI" id="CHEBI:43474"/>
        <dbReference type="ChEBI" id="CHEBI:57701"/>
        <dbReference type="ChEBI" id="CHEBI:58702"/>
        <dbReference type="ChEBI" id="CHEBI:145989"/>
        <dbReference type="EC" id="2.5.1.19"/>
    </reaction>
</comment>
<comment type="cofactor">
    <cofactor>
        <name>Zn(2+)</name>
        <dbReference type="ChEBI" id="CHEBI:29105"/>
    </cofactor>
    <text>Binds 2 Zn(2+) ions per subunit.</text>
</comment>
<comment type="pathway">
    <text evidence="1">Metabolic intermediate biosynthesis; chorismate biosynthesis; chorismate from D-erythrose 4-phosphate and phosphoenolpyruvate: step 2/7.</text>
</comment>
<comment type="pathway">
    <text evidence="1">Metabolic intermediate biosynthesis; chorismate biosynthesis; chorismate from D-erythrose 4-phosphate and phosphoenolpyruvate: step 3/7.</text>
</comment>
<comment type="pathway">
    <text evidence="1">Metabolic intermediate biosynthesis; chorismate biosynthesis; chorismate from D-erythrose 4-phosphate and phosphoenolpyruvate: step 4/7.</text>
</comment>
<comment type="pathway">
    <text evidence="1">Metabolic intermediate biosynthesis; chorismate biosynthesis; chorismate from D-erythrose 4-phosphate and phosphoenolpyruvate: step 5/7.</text>
</comment>
<comment type="pathway">
    <text evidence="1">Metabolic intermediate biosynthesis; chorismate biosynthesis; chorismate from D-erythrose 4-phosphate and phosphoenolpyruvate: step 6/7.</text>
</comment>
<comment type="subunit">
    <text evidence="1">Homodimer.</text>
</comment>
<comment type="subcellular location">
    <subcellularLocation>
        <location evidence="1">Cytoplasm</location>
    </subcellularLocation>
</comment>
<comment type="similarity">
    <text evidence="1">In the N-terminal section; belongs to the sugar phosphate cyclases superfamily. Dehydroquinate synthase family.</text>
</comment>
<comment type="similarity">
    <text evidence="1">In the 2nd section; belongs to the EPSP synthase family.</text>
</comment>
<comment type="similarity">
    <text evidence="1">In the 3rd section; belongs to the shikimate kinase family.</text>
</comment>
<comment type="similarity">
    <text evidence="1">In the 4th section; belongs to the type-I 3-dehydroquinase family.</text>
</comment>
<comment type="similarity">
    <text evidence="1">In the C-terminal section; belongs to the shikimate dehydrogenase family.</text>
</comment>
<organism>
    <name type="scientific">Talaromyces marneffei (strain ATCC 18224 / CBS 334.59 / QM 7333)</name>
    <name type="common">Penicillium marneffei</name>
    <dbReference type="NCBI Taxonomy" id="441960"/>
    <lineage>
        <taxon>Eukaryota</taxon>
        <taxon>Fungi</taxon>
        <taxon>Dikarya</taxon>
        <taxon>Ascomycota</taxon>
        <taxon>Pezizomycotina</taxon>
        <taxon>Eurotiomycetes</taxon>
        <taxon>Eurotiomycetidae</taxon>
        <taxon>Eurotiales</taxon>
        <taxon>Trichocomaceae</taxon>
        <taxon>Talaromyces</taxon>
        <taxon>Talaromyces sect. Talaromyces</taxon>
    </lineage>
</organism>
<accession>B6QWH9</accession>
<proteinExistence type="inferred from homology"/>
<feature type="chain" id="PRO_0000406732" description="Pentafunctional AROM polypeptide 1">
    <location>
        <begin position="1"/>
        <end position="1573"/>
    </location>
</feature>
<feature type="region of interest" description="3-dehydroquinate synthase">
    <location>
        <begin position="1"/>
        <end position="380"/>
    </location>
</feature>
<feature type="region of interest" description="EPSP synthase">
    <location>
        <begin position="393"/>
        <end position="838"/>
    </location>
</feature>
<feature type="region of interest" description="Shikimate kinase">
    <location>
        <begin position="859"/>
        <end position="1051"/>
    </location>
</feature>
<feature type="region of interest" description="3-dehydroquinase">
    <location>
        <begin position="1052"/>
        <end position="1273"/>
    </location>
</feature>
<feature type="region of interest" description="Shikimate dehydrogenase">
    <location>
        <begin position="1286"/>
        <end position="1573"/>
    </location>
</feature>
<feature type="active site" description="Proton acceptor; for 3-dehydroquinate synthase activity" evidence="1">
    <location>
        <position position="256"/>
    </location>
</feature>
<feature type="active site" description="Proton acceptor; for 3-dehydroquinate synthase activity" evidence="1">
    <location>
        <position position="271"/>
    </location>
</feature>
<feature type="active site" description="For EPSP synthase activity" evidence="1">
    <location>
        <position position="820"/>
    </location>
</feature>
<feature type="active site" description="Proton acceptor; for 3-dehydroquinate dehydratase activity" evidence="1">
    <location>
        <position position="1175"/>
    </location>
</feature>
<feature type="active site" description="Schiff-base intermediate with substrate; for 3-dehydroquinate dehydratase activity" evidence="1">
    <location>
        <position position="1203"/>
    </location>
</feature>
<feature type="binding site" evidence="1">
    <location>
        <begin position="44"/>
        <end position="46"/>
    </location>
    <ligand>
        <name>NAD(+)</name>
        <dbReference type="ChEBI" id="CHEBI:57540"/>
    </ligand>
</feature>
<feature type="binding site" evidence="1">
    <location>
        <begin position="81"/>
        <end position="84"/>
    </location>
    <ligand>
        <name>NAD(+)</name>
        <dbReference type="ChEBI" id="CHEBI:57540"/>
    </ligand>
</feature>
<feature type="binding site" evidence="1">
    <location>
        <begin position="112"/>
        <end position="114"/>
    </location>
    <ligand>
        <name>NAD(+)</name>
        <dbReference type="ChEBI" id="CHEBI:57540"/>
    </ligand>
</feature>
<feature type="binding site" evidence="1">
    <location>
        <position position="117"/>
    </location>
    <ligand>
        <name>NAD(+)</name>
        <dbReference type="ChEBI" id="CHEBI:57540"/>
    </ligand>
</feature>
<feature type="binding site" evidence="1">
    <location>
        <position position="128"/>
    </location>
    <ligand>
        <name>7-phospho-2-dehydro-3-deoxy-D-arabino-heptonate</name>
        <dbReference type="ChEBI" id="CHEBI:58394"/>
    </ligand>
</feature>
<feature type="binding site" evidence="1">
    <location>
        <begin position="137"/>
        <end position="138"/>
    </location>
    <ligand>
        <name>NAD(+)</name>
        <dbReference type="ChEBI" id="CHEBI:57540"/>
    </ligand>
</feature>
<feature type="binding site" evidence="1">
    <location>
        <position position="144"/>
    </location>
    <ligand>
        <name>7-phospho-2-dehydro-3-deoxy-D-arabino-heptonate</name>
        <dbReference type="ChEBI" id="CHEBI:58394"/>
    </ligand>
</feature>
<feature type="binding site" evidence="1">
    <location>
        <position position="150"/>
    </location>
    <ligand>
        <name>7-phospho-2-dehydro-3-deoxy-D-arabino-heptonate</name>
        <dbReference type="ChEBI" id="CHEBI:58394"/>
    </ligand>
</feature>
<feature type="binding site" evidence="1">
    <location>
        <position position="159"/>
    </location>
    <ligand>
        <name>NAD(+)</name>
        <dbReference type="ChEBI" id="CHEBI:57540"/>
    </ligand>
</feature>
<feature type="binding site" evidence="1">
    <location>
        <position position="160"/>
    </location>
    <ligand>
        <name>7-phospho-2-dehydro-3-deoxy-D-arabino-heptonate</name>
        <dbReference type="ChEBI" id="CHEBI:58394"/>
    </ligand>
</feature>
<feature type="binding site" evidence="1">
    <location>
        <begin position="177"/>
        <end position="180"/>
    </location>
    <ligand>
        <name>NAD(+)</name>
        <dbReference type="ChEBI" id="CHEBI:57540"/>
    </ligand>
</feature>
<feature type="binding site" evidence="1">
    <location>
        <position position="188"/>
    </location>
    <ligand>
        <name>NAD(+)</name>
        <dbReference type="ChEBI" id="CHEBI:57540"/>
    </ligand>
</feature>
<feature type="binding site" evidence="1">
    <location>
        <begin position="192"/>
        <end position="195"/>
    </location>
    <ligand>
        <name>7-phospho-2-dehydro-3-deoxy-D-arabino-heptonate</name>
        <dbReference type="ChEBI" id="CHEBI:58394"/>
    </ligand>
</feature>
<feature type="binding site" evidence="1">
    <location>
        <position position="192"/>
    </location>
    <ligand>
        <name>Zn(2+)</name>
        <dbReference type="ChEBI" id="CHEBI:29105"/>
        <note>catalytic</note>
    </ligand>
</feature>
<feature type="binding site" evidence="1">
    <location>
        <position position="246"/>
    </location>
    <ligand>
        <name>7-phospho-2-dehydro-3-deoxy-D-arabino-heptonate</name>
        <dbReference type="ChEBI" id="CHEBI:58394"/>
    </ligand>
</feature>
<feature type="binding site" evidence="1">
    <location>
        <begin position="260"/>
        <end position="264"/>
    </location>
    <ligand>
        <name>7-phospho-2-dehydro-3-deoxy-D-arabino-heptonate</name>
        <dbReference type="ChEBI" id="CHEBI:58394"/>
    </ligand>
</feature>
<feature type="binding site" evidence="1">
    <location>
        <position position="267"/>
    </location>
    <ligand>
        <name>7-phospho-2-dehydro-3-deoxy-D-arabino-heptonate</name>
        <dbReference type="ChEBI" id="CHEBI:58394"/>
    </ligand>
</feature>
<feature type="binding site" evidence="1">
    <location>
        <position position="267"/>
    </location>
    <ligand>
        <name>Zn(2+)</name>
        <dbReference type="ChEBI" id="CHEBI:29105"/>
        <note>catalytic</note>
    </ligand>
</feature>
<feature type="binding site" evidence="1">
    <location>
        <position position="283"/>
    </location>
    <ligand>
        <name>7-phospho-2-dehydro-3-deoxy-D-arabino-heptonate</name>
        <dbReference type="ChEBI" id="CHEBI:58394"/>
    </ligand>
</feature>
<feature type="binding site" evidence="1">
    <location>
        <position position="283"/>
    </location>
    <ligand>
        <name>Zn(2+)</name>
        <dbReference type="ChEBI" id="CHEBI:29105"/>
        <note>catalytic</note>
    </ligand>
</feature>
<feature type="binding site" evidence="1">
    <location>
        <position position="352"/>
    </location>
    <ligand>
        <name>7-phospho-2-dehydro-3-deoxy-D-arabino-heptonate</name>
        <dbReference type="ChEBI" id="CHEBI:58394"/>
    </ligand>
</feature>
<feature type="binding site" evidence="1">
    <location>
        <begin position="866"/>
        <end position="873"/>
    </location>
    <ligand>
        <name>ATP</name>
        <dbReference type="ChEBI" id="CHEBI:30616"/>
    </ligand>
</feature>
<gene>
    <name evidence="1" type="primary">aroM-1</name>
    <name type="ORF">PMAA_008390</name>
</gene>